<keyword id="KW-0165">Cleavage on pair of basic residues</keyword>
<keyword id="KW-1015">Disulfide bond</keyword>
<keyword id="KW-0245">EGF-like domain</keyword>
<keyword id="KW-0325">Glycoprotein</keyword>
<keyword id="KW-0378">Hydrolase</keyword>
<keyword id="KW-0420">Kringle</keyword>
<keyword id="KW-0617">Plasminogen activation</keyword>
<keyword id="KW-0645">Protease</keyword>
<keyword id="KW-1185">Reference proteome</keyword>
<keyword id="KW-0677">Repeat</keyword>
<keyword id="KW-0964">Secreted</keyword>
<keyword id="KW-0720">Serine protease</keyword>
<keyword id="KW-0732">Signal</keyword>
<keyword id="KW-0865">Zymogen</keyword>
<evidence type="ECO:0000250" key="1"/>
<evidence type="ECO:0000250" key="2">
    <source>
        <dbReference type="UniProtKB" id="P00750"/>
    </source>
</evidence>
<evidence type="ECO:0000250" key="3">
    <source>
        <dbReference type="UniProtKB" id="P19637"/>
    </source>
</evidence>
<evidence type="ECO:0000255" key="4"/>
<evidence type="ECO:0000255" key="5">
    <source>
        <dbReference type="PROSITE-ProRule" id="PRU00076"/>
    </source>
</evidence>
<evidence type="ECO:0000255" key="6">
    <source>
        <dbReference type="PROSITE-ProRule" id="PRU00121"/>
    </source>
</evidence>
<evidence type="ECO:0000255" key="7">
    <source>
        <dbReference type="PROSITE-ProRule" id="PRU00274"/>
    </source>
</evidence>
<evidence type="ECO:0000255" key="8">
    <source>
        <dbReference type="PROSITE-ProRule" id="PRU00478"/>
    </source>
</evidence>
<evidence type="ECO:0000305" key="9"/>
<name>TPA_BOVIN</name>
<comment type="function">
    <text evidence="3">Converts the abundant, but inactive, zymogen plasminogen to plasmin by hydrolyzing a single Arg-Val bond in plasminogen. By controlling plasmin-mediated proteolysis, it plays an important role in tissue remodeling and degradation, in cell migration and many other physiopathological events. During oocyte activation, plays a role in cortical granule reaction in the zona reaction, which contributes to the block to polyspermy.</text>
</comment>
<comment type="catalytic activity">
    <reaction>
        <text>Specific cleavage of Arg-|-Val bond in plasminogen to form plasmin.</text>
        <dbReference type="EC" id="3.4.21.68"/>
    </reaction>
</comment>
<comment type="activity regulation">
    <text evidence="2">Inhibited by SERPINA5 (By similarity). Inhibited by SERPINE1 (By similarity).</text>
</comment>
<comment type="subunit">
    <text evidence="1 2">Heterodimer of chain A and chain B held by a disulfide bond. Binds to fibrin with high affinity. This interaction leads to an increase in the catalytic efficiency of the enzyme due to an increase in affinity for plasminogen. Similarly, binding to heparin increases the activation of plasminogen. Binds to annexin A2, cytokeratin-8, fibronectin and laminin. Binds to mannose receptor and the low-density lipoprotein receptor-related protein (LRP1); these proteins are involved in TPA clearance. Binds LRP1B; binding is followed by internalization and degradation. Forms heterodimer with SERPINA5 (By similarity). Interacts with SERPINE1 (By similarity). In complex with SERPINE1, interacts with SORL1 (By similarity).</text>
</comment>
<comment type="subcellular location">
    <subcellularLocation>
        <location>Secreted</location>
        <location>Extracellular space</location>
    </subcellularLocation>
</comment>
<comment type="domain">
    <text evidence="1">Both FN1 and one of the kringle domains are required for binding to fibrin.</text>
</comment>
<comment type="domain">
    <text evidence="1">Both FN1 and EGF-like domains are important for binding to LRP1.</text>
</comment>
<comment type="domain">
    <text evidence="1">The FN1 domain mediates binding to annexin A2.</text>
</comment>
<comment type="domain">
    <text evidence="1">The second kringle domain is implicated in binding to cytokeratin-8 and to the endothelial cell surface binding site.</text>
</comment>
<comment type="PTM">
    <text>The single chain, almost fully active enzyme, can be further processed into a two-chain fully active form by a cleavage after Arg-314 catalyzed by plasmin, tissue kallikrein or factor Xa.</text>
</comment>
<comment type="miscellaneous">
    <text>Binds to the kringle structure of the fibrin A chain. Binding to fibrin enhances its catalytic activity.</text>
</comment>
<comment type="similarity">
    <text evidence="7">Belongs to the peptidase S1 family.</text>
</comment>
<feature type="signal peptide" evidence="1">
    <location>
        <begin position="1"/>
        <end position="21"/>
    </location>
</feature>
<feature type="propeptide" id="PRO_0000028344" evidence="1">
    <location>
        <begin position="22"/>
        <end position="33"/>
    </location>
</feature>
<feature type="propeptide" id="PRO_0000285905" description="Removed by plasmin" evidence="1">
    <location>
        <begin position="34"/>
        <end position="36"/>
    </location>
</feature>
<feature type="chain" id="PRO_0000028345" description="Tissue-type plasminogen activator">
    <location>
        <begin position="37"/>
        <end position="566"/>
    </location>
</feature>
<feature type="chain" id="PRO_0000028346" description="Tissue-type plasminogen activator chain A">
    <location>
        <begin position="37"/>
        <end position="314"/>
    </location>
</feature>
<feature type="chain" id="PRO_0000028347" description="Tissue-type plasminogen activator chain B">
    <location>
        <begin position="315"/>
        <end position="566"/>
    </location>
</feature>
<feature type="domain" description="Fibronectin type-I" evidence="8">
    <location>
        <begin position="40"/>
        <end position="82"/>
    </location>
</feature>
<feature type="domain" description="EGF-like" evidence="5">
    <location>
        <begin position="83"/>
        <end position="121"/>
    </location>
</feature>
<feature type="domain" description="Kringle 1" evidence="6">
    <location>
        <begin position="128"/>
        <end position="209"/>
    </location>
</feature>
<feature type="domain" description="Kringle 2" evidence="6">
    <location>
        <begin position="219"/>
        <end position="300"/>
    </location>
</feature>
<feature type="domain" description="Peptidase S1" evidence="7">
    <location>
        <begin position="315"/>
        <end position="565"/>
    </location>
</feature>
<feature type="region of interest" description="Important for binding to annexin A2" evidence="1">
    <location>
        <begin position="43"/>
        <end position="53"/>
    </location>
</feature>
<feature type="active site" description="Charge relay system">
    <location>
        <position position="361"/>
    </location>
</feature>
<feature type="active site" description="Charge relay system">
    <location>
        <position position="410"/>
    </location>
</feature>
<feature type="active site" description="Charge relay system">
    <location>
        <position position="517"/>
    </location>
</feature>
<feature type="site" description="Important for binding to LRP1" evidence="1">
    <location>
        <position position="103"/>
    </location>
</feature>
<feature type="site" description="Important for single-chain activity" evidence="1">
    <location>
        <position position="468"/>
    </location>
</feature>
<feature type="site" description="Important for single-chain activity" evidence="1">
    <location>
        <position position="516"/>
    </location>
</feature>
<feature type="glycosylation site" description="N-linked (GlcNAc...) asparagine" evidence="4">
    <location>
        <position position="153"/>
    </location>
</feature>
<feature type="glycosylation site" description="N-linked (GlcNAc...) asparagine" evidence="4">
    <location>
        <position position="487"/>
    </location>
</feature>
<feature type="disulfide bond" evidence="1">
    <location>
        <begin position="42"/>
        <end position="72"/>
    </location>
</feature>
<feature type="disulfide bond" evidence="1">
    <location>
        <begin position="70"/>
        <end position="79"/>
    </location>
</feature>
<feature type="disulfide bond" evidence="1">
    <location>
        <begin position="87"/>
        <end position="98"/>
    </location>
</feature>
<feature type="disulfide bond" evidence="1">
    <location>
        <begin position="92"/>
        <end position="109"/>
    </location>
</feature>
<feature type="disulfide bond" evidence="1">
    <location>
        <begin position="111"/>
        <end position="120"/>
    </location>
</feature>
<feature type="disulfide bond" evidence="1">
    <location>
        <begin position="128"/>
        <end position="209"/>
    </location>
</feature>
<feature type="disulfide bond" evidence="1">
    <location>
        <begin position="149"/>
        <end position="191"/>
    </location>
</feature>
<feature type="disulfide bond" evidence="1">
    <location>
        <begin position="180"/>
        <end position="204"/>
    </location>
</feature>
<feature type="disulfide bond" evidence="1">
    <location>
        <begin position="219"/>
        <end position="300"/>
    </location>
</feature>
<feature type="disulfide bond" evidence="1">
    <location>
        <begin position="240"/>
        <end position="282"/>
    </location>
</feature>
<feature type="disulfide bond" evidence="1">
    <location>
        <begin position="271"/>
        <end position="295"/>
    </location>
</feature>
<feature type="disulfide bond" description="Interchain (between A and B chains)" evidence="5 6 7 8">
    <location>
        <begin position="303"/>
        <end position="434"/>
    </location>
</feature>
<feature type="disulfide bond" evidence="1">
    <location>
        <begin position="346"/>
        <end position="362"/>
    </location>
</feature>
<feature type="disulfide bond" evidence="1">
    <location>
        <begin position="354"/>
        <end position="423"/>
    </location>
</feature>
<feature type="disulfide bond" evidence="1">
    <location>
        <begin position="448"/>
        <end position="523"/>
    </location>
</feature>
<feature type="disulfide bond" evidence="1">
    <location>
        <begin position="480"/>
        <end position="496"/>
    </location>
</feature>
<feature type="disulfide bond" evidence="1">
    <location>
        <begin position="513"/>
        <end position="541"/>
    </location>
</feature>
<feature type="sequence conflict" description="In Ref. 2; AAI05349." evidence="9" ref="2">
    <original>H</original>
    <variation>L</variation>
    <location>
        <position position="370"/>
    </location>
</feature>
<reference key="1">
    <citation type="journal article" date="1995" name="Int. Dairy J.">
        <title>Cloning and characterization of the bovine plasminogen activators uPA and tPA.</title>
        <authorList>
            <person name="Ravn P."/>
            <person name="Berglund L."/>
            <person name="Petersen T.E."/>
        </authorList>
        <dbReference type="AGRICOLA" id="IND20546782"/>
    </citation>
    <scope>NUCLEOTIDE SEQUENCE [MRNA]</scope>
    <source>
        <tissue>Kidney</tissue>
    </source>
</reference>
<reference key="2">
    <citation type="submission" date="2005-09" db="EMBL/GenBank/DDBJ databases">
        <authorList>
            <consortium name="NIH - Mammalian Gene Collection (MGC) project"/>
        </authorList>
    </citation>
    <scope>NUCLEOTIDE SEQUENCE [LARGE SCALE MRNA]</scope>
    <source>
        <strain>Crossbred X Angus</strain>
        <tissue>Ileum</tissue>
    </source>
</reference>
<dbReference type="EC" id="3.4.21.68"/>
<dbReference type="EMBL" id="X85800">
    <property type="protein sequence ID" value="CAA59795.1"/>
    <property type="molecule type" value="mRNA"/>
</dbReference>
<dbReference type="EMBL" id="BC105348">
    <property type="protein sequence ID" value="AAI05349.1"/>
    <property type="molecule type" value="mRNA"/>
</dbReference>
<dbReference type="RefSeq" id="NP_776571.2">
    <property type="nucleotide sequence ID" value="NM_174146.3"/>
</dbReference>
<dbReference type="SMR" id="Q28198"/>
<dbReference type="FunCoup" id="Q28198">
    <property type="interactions" value="313"/>
</dbReference>
<dbReference type="STRING" id="9913.ENSBTAP00000001642"/>
<dbReference type="MEROPS" id="S01.232"/>
<dbReference type="GlyCosmos" id="Q28198">
    <property type="glycosylation" value="2 sites, No reported glycans"/>
</dbReference>
<dbReference type="GlyGen" id="Q28198">
    <property type="glycosylation" value="2 sites"/>
</dbReference>
<dbReference type="PaxDb" id="9913-ENSBTAP00000001642"/>
<dbReference type="GeneID" id="281407"/>
<dbReference type="KEGG" id="bta:281407"/>
<dbReference type="CTD" id="5327"/>
<dbReference type="eggNOG" id="KOG3627">
    <property type="taxonomic scope" value="Eukaryota"/>
</dbReference>
<dbReference type="HOGENOM" id="CLU_006842_18_4_1"/>
<dbReference type="InParanoid" id="Q28198"/>
<dbReference type="OrthoDB" id="6020543at2759"/>
<dbReference type="TreeFam" id="TF329901"/>
<dbReference type="Proteomes" id="UP000009136">
    <property type="component" value="Unplaced"/>
</dbReference>
<dbReference type="GO" id="GO:0005615">
    <property type="term" value="C:extracellular space"/>
    <property type="evidence" value="ECO:0000314"/>
    <property type="project" value="AgBase"/>
</dbReference>
<dbReference type="GO" id="GO:0051219">
    <property type="term" value="F:phosphoprotein binding"/>
    <property type="evidence" value="ECO:0000353"/>
    <property type="project" value="AgBase"/>
</dbReference>
<dbReference type="GO" id="GO:0004252">
    <property type="term" value="F:serine-type endopeptidase activity"/>
    <property type="evidence" value="ECO:0000314"/>
    <property type="project" value="AgBase"/>
</dbReference>
<dbReference type="GO" id="GO:0097655">
    <property type="term" value="F:serpin family protein binding"/>
    <property type="evidence" value="ECO:0000353"/>
    <property type="project" value="AgBase"/>
</dbReference>
<dbReference type="GO" id="GO:0031639">
    <property type="term" value="P:plasminogen activation"/>
    <property type="evidence" value="ECO:0000314"/>
    <property type="project" value="AgBase"/>
</dbReference>
<dbReference type="GO" id="GO:0048008">
    <property type="term" value="P:platelet-derived growth factor receptor signaling pathway"/>
    <property type="evidence" value="ECO:0000318"/>
    <property type="project" value="GO_Central"/>
</dbReference>
<dbReference type="GO" id="GO:0060468">
    <property type="term" value="P:prevention of polyspermy"/>
    <property type="evidence" value="ECO:0000250"/>
    <property type="project" value="UniProtKB"/>
</dbReference>
<dbReference type="GO" id="GO:0006508">
    <property type="term" value="P:proteolysis"/>
    <property type="evidence" value="ECO:0000314"/>
    <property type="project" value="AgBase"/>
</dbReference>
<dbReference type="GO" id="GO:0014909">
    <property type="term" value="P:smooth muscle cell migration"/>
    <property type="evidence" value="ECO:0000318"/>
    <property type="project" value="GO_Central"/>
</dbReference>
<dbReference type="CDD" id="cd00054">
    <property type="entry name" value="EGF_CA"/>
    <property type="match status" value="1"/>
</dbReference>
<dbReference type="CDD" id="cd00061">
    <property type="entry name" value="FN1"/>
    <property type="match status" value="1"/>
</dbReference>
<dbReference type="CDD" id="cd00108">
    <property type="entry name" value="KR"/>
    <property type="match status" value="2"/>
</dbReference>
<dbReference type="CDD" id="cd00190">
    <property type="entry name" value="Tryp_SPc"/>
    <property type="match status" value="1"/>
</dbReference>
<dbReference type="FunFam" id="2.40.10.10:FF:000054">
    <property type="entry name" value="Complement C1r subcomponent"/>
    <property type="match status" value="1"/>
</dbReference>
<dbReference type="FunFam" id="2.10.70.10:FF:000043">
    <property type="entry name" value="Plasminogen activator"/>
    <property type="match status" value="1"/>
</dbReference>
<dbReference type="FunFam" id="2.10.25.10:FF:000483">
    <property type="entry name" value="Tissue-type plasminogen activator"/>
    <property type="match status" value="1"/>
</dbReference>
<dbReference type="FunFam" id="2.40.10.10:FF:000058">
    <property type="entry name" value="Tissue-type plasminogen activator"/>
    <property type="match status" value="1"/>
</dbReference>
<dbReference type="FunFam" id="2.40.20.10:FF:000001">
    <property type="entry name" value="Urokinase-type plasminogen activator"/>
    <property type="match status" value="2"/>
</dbReference>
<dbReference type="Gene3D" id="2.10.70.10">
    <property type="entry name" value="Complement Module, domain 1"/>
    <property type="match status" value="1"/>
</dbReference>
<dbReference type="Gene3D" id="2.10.25.10">
    <property type="entry name" value="Laminin"/>
    <property type="match status" value="1"/>
</dbReference>
<dbReference type="Gene3D" id="2.40.20.10">
    <property type="entry name" value="Plasminogen Kringle 4"/>
    <property type="match status" value="2"/>
</dbReference>
<dbReference type="Gene3D" id="2.40.10.10">
    <property type="entry name" value="Trypsin-like serine proteases"/>
    <property type="match status" value="2"/>
</dbReference>
<dbReference type="InterPro" id="IPR000742">
    <property type="entry name" value="EGF-like_dom"/>
</dbReference>
<dbReference type="InterPro" id="IPR000083">
    <property type="entry name" value="Fibronectin_type1"/>
</dbReference>
<dbReference type="InterPro" id="IPR000001">
    <property type="entry name" value="Kringle"/>
</dbReference>
<dbReference type="InterPro" id="IPR013806">
    <property type="entry name" value="Kringle-like"/>
</dbReference>
<dbReference type="InterPro" id="IPR018056">
    <property type="entry name" value="Kringle_CS"/>
</dbReference>
<dbReference type="InterPro" id="IPR038178">
    <property type="entry name" value="Kringle_sf"/>
</dbReference>
<dbReference type="InterPro" id="IPR009003">
    <property type="entry name" value="Peptidase_S1_PA"/>
</dbReference>
<dbReference type="InterPro" id="IPR043504">
    <property type="entry name" value="Peptidase_S1_PA_chymotrypsin"/>
</dbReference>
<dbReference type="InterPro" id="IPR001314">
    <property type="entry name" value="Peptidase_S1A"/>
</dbReference>
<dbReference type="InterPro" id="IPR050127">
    <property type="entry name" value="Serine_Proteases_S1"/>
</dbReference>
<dbReference type="InterPro" id="IPR026280">
    <property type="entry name" value="Tissue_plasm_act"/>
</dbReference>
<dbReference type="InterPro" id="IPR001254">
    <property type="entry name" value="Trypsin_dom"/>
</dbReference>
<dbReference type="InterPro" id="IPR018114">
    <property type="entry name" value="TRYPSIN_HIS"/>
</dbReference>
<dbReference type="InterPro" id="IPR033116">
    <property type="entry name" value="TRYPSIN_SER"/>
</dbReference>
<dbReference type="PANTHER" id="PTHR24264:SF42">
    <property type="entry name" value="TISSUE-TYPE PLASMINOGEN ACTIVATOR"/>
    <property type="match status" value="1"/>
</dbReference>
<dbReference type="PANTHER" id="PTHR24264">
    <property type="entry name" value="TRYPSIN-RELATED"/>
    <property type="match status" value="1"/>
</dbReference>
<dbReference type="Pfam" id="PF00008">
    <property type="entry name" value="EGF"/>
    <property type="match status" value="1"/>
</dbReference>
<dbReference type="Pfam" id="PF00039">
    <property type="entry name" value="fn1"/>
    <property type="match status" value="1"/>
</dbReference>
<dbReference type="Pfam" id="PF00051">
    <property type="entry name" value="Kringle"/>
    <property type="match status" value="2"/>
</dbReference>
<dbReference type="Pfam" id="PF00089">
    <property type="entry name" value="Trypsin"/>
    <property type="match status" value="1"/>
</dbReference>
<dbReference type="PIRSF" id="PIRSF001145">
    <property type="entry name" value="Tissue_plasm_act"/>
    <property type="match status" value="1"/>
</dbReference>
<dbReference type="PRINTS" id="PR00722">
    <property type="entry name" value="CHYMOTRYPSIN"/>
</dbReference>
<dbReference type="PRINTS" id="PR00018">
    <property type="entry name" value="KRINGLE"/>
</dbReference>
<dbReference type="SMART" id="SM00181">
    <property type="entry name" value="EGF"/>
    <property type="match status" value="1"/>
</dbReference>
<dbReference type="SMART" id="SM00058">
    <property type="entry name" value="FN1"/>
    <property type="match status" value="1"/>
</dbReference>
<dbReference type="SMART" id="SM00130">
    <property type="entry name" value="KR"/>
    <property type="match status" value="2"/>
</dbReference>
<dbReference type="SMART" id="SM00020">
    <property type="entry name" value="Tryp_SPc"/>
    <property type="match status" value="1"/>
</dbReference>
<dbReference type="SUPFAM" id="SSF57603">
    <property type="entry name" value="FnI-like domain"/>
    <property type="match status" value="1"/>
</dbReference>
<dbReference type="SUPFAM" id="SSF57440">
    <property type="entry name" value="Kringle-like"/>
    <property type="match status" value="2"/>
</dbReference>
<dbReference type="SUPFAM" id="SSF50494">
    <property type="entry name" value="Trypsin-like serine proteases"/>
    <property type="match status" value="1"/>
</dbReference>
<dbReference type="PROSITE" id="PS00022">
    <property type="entry name" value="EGF_1"/>
    <property type="match status" value="1"/>
</dbReference>
<dbReference type="PROSITE" id="PS01186">
    <property type="entry name" value="EGF_2"/>
    <property type="match status" value="1"/>
</dbReference>
<dbReference type="PROSITE" id="PS50026">
    <property type="entry name" value="EGF_3"/>
    <property type="match status" value="1"/>
</dbReference>
<dbReference type="PROSITE" id="PS01253">
    <property type="entry name" value="FN1_1"/>
    <property type="match status" value="1"/>
</dbReference>
<dbReference type="PROSITE" id="PS51091">
    <property type="entry name" value="FN1_2"/>
    <property type="match status" value="1"/>
</dbReference>
<dbReference type="PROSITE" id="PS00021">
    <property type="entry name" value="KRINGLE_1"/>
    <property type="match status" value="1"/>
</dbReference>
<dbReference type="PROSITE" id="PS50070">
    <property type="entry name" value="KRINGLE_2"/>
    <property type="match status" value="2"/>
</dbReference>
<dbReference type="PROSITE" id="PS50240">
    <property type="entry name" value="TRYPSIN_DOM"/>
    <property type="match status" value="1"/>
</dbReference>
<dbReference type="PROSITE" id="PS00134">
    <property type="entry name" value="TRYPSIN_HIS"/>
    <property type="match status" value="1"/>
</dbReference>
<dbReference type="PROSITE" id="PS00135">
    <property type="entry name" value="TRYPSIN_SER"/>
    <property type="match status" value="1"/>
</dbReference>
<organism>
    <name type="scientific">Bos taurus</name>
    <name type="common">Bovine</name>
    <dbReference type="NCBI Taxonomy" id="9913"/>
    <lineage>
        <taxon>Eukaryota</taxon>
        <taxon>Metazoa</taxon>
        <taxon>Chordata</taxon>
        <taxon>Craniata</taxon>
        <taxon>Vertebrata</taxon>
        <taxon>Euteleostomi</taxon>
        <taxon>Mammalia</taxon>
        <taxon>Eutheria</taxon>
        <taxon>Laurasiatheria</taxon>
        <taxon>Artiodactyla</taxon>
        <taxon>Ruminantia</taxon>
        <taxon>Pecora</taxon>
        <taxon>Bovidae</taxon>
        <taxon>Bovinae</taxon>
        <taxon>Bos</taxon>
    </lineage>
</organism>
<accession>Q28198</accession>
<accession>Q2KJG9</accession>
<proteinExistence type="evidence at transcript level"/>
<sequence length="566" mass="63701">MMSAMKTEFLCVLLLCGAVFTSPSQETYRRLRRGARSYKVTCRDGKTQMTYRQHDSWLRPLLRGNQVEHCWCDGGRAQCHSVPVRSCSEPWCFNGGTCRQALYSSDFVCQCPEGFMGKLCEIDATATCYKDQGVAYRGTWSTAESGAECANWNSSGLAMKPYSGRRPNAIRLGLGNHNYCRNPDQDSKPWCYVFKAGKYISEFCSTPACAKVAEEDGDCYTGNGLAYRGTRSHTKSGASCLPWNSVFLTSKIYTAWKSNAPALGLGKHNHCRNPDGDAQPWCHVWKDRQLTWEYCDVPQCVTCGLRQYKRPQFRIKGGLFADITSHPWQAAIFVKNRRSPGERFLCGGILISSCWVLSAAHCFQERYPPHHLKVFLGRTYRLVPGEEEQTFEVEKYIIHKEFDDDTYDNDIALLHLKSDSLTCARESASVRTICLPDASLQLPDWTECELSGYGKHESSSPFFSERLKEAHVRLYPSSRCTSQHLFNRTVTNNMLCAGDTRSGGDHTNLHDACQGDSGGPLVCMKDNHMTLVGIISWGLGCGRKDVPGVYTKVTNYLDWIRDNTRP</sequence>
<gene>
    <name type="primary">PLAT</name>
</gene>
<protein>
    <recommendedName>
        <fullName>Tissue-type plasminogen activator</fullName>
        <shortName>t-PA</shortName>
        <shortName>t-plasminogen activator</shortName>
        <shortName>tPA</shortName>
        <ecNumber>3.4.21.68</ecNumber>
    </recommendedName>
    <component>
        <recommendedName>
            <fullName>Tissue-type plasminogen activator chain A</fullName>
        </recommendedName>
    </component>
    <component>
        <recommendedName>
            <fullName>Tissue-type plasminogen activator chain B</fullName>
        </recommendedName>
    </component>
</protein>